<name>TT2_ARATH</name>
<feature type="chain" id="PRO_0000197078" description="Transcription factor TT2">
    <location>
        <begin position="1"/>
        <end position="258"/>
    </location>
</feature>
<feature type="domain" description="HTH myb-type 1" evidence="2">
    <location>
        <begin position="11"/>
        <end position="63"/>
    </location>
</feature>
<feature type="domain" description="HTH myb-type 2" evidence="2">
    <location>
        <begin position="64"/>
        <end position="118"/>
    </location>
</feature>
<feature type="DNA-binding region" description="H-T-H motif" evidence="2">
    <location>
        <begin position="39"/>
        <end position="63"/>
    </location>
</feature>
<feature type="DNA-binding region" description="H-T-H motif" evidence="2">
    <location>
        <begin position="91"/>
        <end position="114"/>
    </location>
</feature>
<feature type="binding site" evidence="1">
    <location>
        <begin position="47"/>
        <end position="54"/>
    </location>
    <ligand>
        <name>ATP</name>
        <dbReference type="ChEBI" id="CHEBI:30616"/>
    </ligand>
</feature>
<feature type="sequence variant" description="In strain: cv. Wassilewskija.">
    <original>Q</original>
    <variation>L</variation>
    <location>
        <position position="174"/>
    </location>
</feature>
<feature type="mutagenesis site" description="In tt2-4; loss of seed pigmentation.">
    <original>G</original>
    <variation>R</variation>
    <location>
        <position position="66"/>
    </location>
</feature>
<feature type="mutagenesis site" description="In tt2-2; reduced seed pigmentation.">
    <location>
        <begin position="127"/>
        <end position="258"/>
    </location>
</feature>
<gene>
    <name type="primary">TT2</name>
    <name type="synonym">MYB123</name>
    <name type="ordered locus">At5g35550</name>
    <name type="ORF">MOK9.18</name>
</gene>
<dbReference type="EMBL" id="AJ299452">
    <property type="protein sequence ID" value="CAC40021.1"/>
    <property type="molecule type" value="Genomic_DNA"/>
</dbReference>
<dbReference type="EMBL" id="AF371981">
    <property type="protein sequence ID" value="AAK54744.1"/>
    <property type="molecule type" value="mRNA"/>
</dbReference>
<dbReference type="EMBL" id="AY519630">
    <property type="protein sequence ID" value="AAS10100.1"/>
    <property type="molecule type" value="mRNA"/>
</dbReference>
<dbReference type="EMBL" id="AB015477">
    <property type="protein sequence ID" value="BAB08716.1"/>
    <property type="molecule type" value="Genomic_DNA"/>
</dbReference>
<dbReference type="EMBL" id="CP002688">
    <property type="protein sequence ID" value="AED93980.1"/>
    <property type="molecule type" value="Genomic_DNA"/>
</dbReference>
<dbReference type="EMBL" id="DQ447000">
    <property type="protein sequence ID" value="ABE66191.1"/>
    <property type="molecule type" value="mRNA"/>
</dbReference>
<dbReference type="EMBL" id="DQ653318">
    <property type="protein sequence ID" value="ABK28720.1"/>
    <property type="status" value="ALT_SEQ"/>
    <property type="molecule type" value="mRNA"/>
</dbReference>
<dbReference type="RefSeq" id="NP_198405.1">
    <property type="nucleotide sequence ID" value="NM_122946.3"/>
</dbReference>
<dbReference type="SMR" id="Q9FJA2"/>
<dbReference type="BioGRID" id="18773">
    <property type="interactions" value="22"/>
</dbReference>
<dbReference type="FunCoup" id="Q9FJA2">
    <property type="interactions" value="1"/>
</dbReference>
<dbReference type="IntAct" id="Q9FJA2">
    <property type="interactions" value="17"/>
</dbReference>
<dbReference type="STRING" id="3702.Q9FJA2"/>
<dbReference type="iPTMnet" id="Q9FJA2"/>
<dbReference type="PaxDb" id="3702-AT5G35550.1"/>
<dbReference type="ProteomicsDB" id="234653"/>
<dbReference type="EnsemblPlants" id="AT5G35550.1">
    <property type="protein sequence ID" value="AT5G35550.1"/>
    <property type="gene ID" value="AT5G35550"/>
</dbReference>
<dbReference type="GeneID" id="833520"/>
<dbReference type="Gramene" id="AT5G35550.1">
    <property type="protein sequence ID" value="AT5G35550.1"/>
    <property type="gene ID" value="AT5G35550"/>
</dbReference>
<dbReference type="KEGG" id="ath:AT5G35550"/>
<dbReference type="Araport" id="AT5G35550"/>
<dbReference type="TAIR" id="AT5G35550">
    <property type="gene designation" value="TT2"/>
</dbReference>
<dbReference type="eggNOG" id="KOG0048">
    <property type="taxonomic scope" value="Eukaryota"/>
</dbReference>
<dbReference type="HOGENOM" id="CLU_028567_6_7_1"/>
<dbReference type="InParanoid" id="Q9FJA2"/>
<dbReference type="OMA" id="MNKVCVI"/>
<dbReference type="PhylomeDB" id="Q9FJA2"/>
<dbReference type="PRO" id="PR:Q9FJA2"/>
<dbReference type="Proteomes" id="UP000006548">
    <property type="component" value="Chromosome 5"/>
</dbReference>
<dbReference type="ExpressionAtlas" id="Q9FJA2">
    <property type="expression patterns" value="baseline and differential"/>
</dbReference>
<dbReference type="GO" id="GO:0005634">
    <property type="term" value="C:nucleus"/>
    <property type="evidence" value="ECO:0000314"/>
    <property type="project" value="TAIR"/>
</dbReference>
<dbReference type="GO" id="GO:0005524">
    <property type="term" value="F:ATP binding"/>
    <property type="evidence" value="ECO:0007669"/>
    <property type="project" value="UniProtKB-KW"/>
</dbReference>
<dbReference type="GO" id="GO:0003677">
    <property type="term" value="F:DNA binding"/>
    <property type="evidence" value="ECO:0007669"/>
    <property type="project" value="UniProtKB-KW"/>
</dbReference>
<dbReference type="GO" id="GO:0003700">
    <property type="term" value="F:DNA-binding transcription factor activity"/>
    <property type="evidence" value="ECO:0000250"/>
    <property type="project" value="TAIR"/>
</dbReference>
<dbReference type="GO" id="GO:0006633">
    <property type="term" value="P:fatty acid biosynthetic process"/>
    <property type="evidence" value="ECO:0000315"/>
    <property type="project" value="TAIR"/>
</dbReference>
<dbReference type="GO" id="GO:0009813">
    <property type="term" value="P:flavonoid biosynthetic process"/>
    <property type="evidence" value="ECO:0007669"/>
    <property type="project" value="UniProtKB-KW"/>
</dbReference>
<dbReference type="GO" id="GO:0010023">
    <property type="term" value="P:proanthocyanidin biosynthetic process"/>
    <property type="evidence" value="ECO:0000315"/>
    <property type="project" value="TAIR"/>
</dbReference>
<dbReference type="GO" id="GO:0006970">
    <property type="term" value="P:response to osmotic stress"/>
    <property type="evidence" value="ECO:0000315"/>
    <property type="project" value="TAIR"/>
</dbReference>
<dbReference type="CDD" id="cd00167">
    <property type="entry name" value="SANT"/>
    <property type="match status" value="2"/>
</dbReference>
<dbReference type="FunFam" id="1.10.10.60:FF:000001">
    <property type="entry name" value="MYB-related transcription factor"/>
    <property type="match status" value="1"/>
</dbReference>
<dbReference type="FunFam" id="1.10.10.60:FF:000302">
    <property type="entry name" value="Transcription factor TT2"/>
    <property type="match status" value="1"/>
</dbReference>
<dbReference type="Gene3D" id="1.10.10.60">
    <property type="entry name" value="Homeodomain-like"/>
    <property type="match status" value="2"/>
</dbReference>
<dbReference type="InterPro" id="IPR009057">
    <property type="entry name" value="Homeodomain-like_sf"/>
</dbReference>
<dbReference type="InterPro" id="IPR017930">
    <property type="entry name" value="Myb_dom"/>
</dbReference>
<dbReference type="InterPro" id="IPR015495">
    <property type="entry name" value="Myb_TF_plants"/>
</dbReference>
<dbReference type="InterPro" id="IPR001005">
    <property type="entry name" value="SANT/Myb"/>
</dbReference>
<dbReference type="PANTHER" id="PTHR47999:SF86">
    <property type="entry name" value="MYB-RELATED PROTEIN MYB4-LIKE"/>
    <property type="match status" value="1"/>
</dbReference>
<dbReference type="PANTHER" id="PTHR47999">
    <property type="entry name" value="TRANSCRIPTION FACTOR MYB8-RELATED-RELATED"/>
    <property type="match status" value="1"/>
</dbReference>
<dbReference type="Pfam" id="PF00249">
    <property type="entry name" value="Myb_DNA-binding"/>
    <property type="match status" value="2"/>
</dbReference>
<dbReference type="SMART" id="SM00717">
    <property type="entry name" value="SANT"/>
    <property type="match status" value="2"/>
</dbReference>
<dbReference type="SUPFAM" id="SSF46689">
    <property type="entry name" value="Homeodomain-like"/>
    <property type="match status" value="1"/>
</dbReference>
<dbReference type="PROSITE" id="PS51294">
    <property type="entry name" value="HTH_MYB"/>
    <property type="match status" value="2"/>
</dbReference>
<accession>Q9FJA2</accession>
<accession>A0MFJ2</accession>
<accession>Q53YP9</accession>
<sequence>MGKRATTSVRREELNRGAWTDHEDKILRDYITTHGEGKWSTLPNQAGLKRCGKSCRLRWKNYLRPGIKRGNISSDEEELIIRLHNLLGNRWSLIAGRLPGRTDNEIKNHWNSNLRKRLPKTQTKQPKRIKHSTNNENNVCVIRTKAIRCSKTLLFSDLSLQKKSSTSPLPLKEQEMDQGGSSLMGDLEFDFDRIHSEFHFPDLMDFDGLDCGNVTSLVSSNEILGELVPAQGNLDLNRPFTSCHHRGDDEDWLRDFTC</sequence>
<keyword id="KW-0010">Activator</keyword>
<keyword id="KW-0067">ATP-binding</keyword>
<keyword id="KW-0238">DNA-binding</keyword>
<keyword id="KW-0284">Flavonoid biosynthesis</keyword>
<keyword id="KW-0547">Nucleotide-binding</keyword>
<keyword id="KW-0539">Nucleus</keyword>
<keyword id="KW-1185">Reference proteome</keyword>
<keyword id="KW-0677">Repeat</keyword>
<keyword id="KW-0804">Transcription</keyword>
<keyword id="KW-0805">Transcription regulation</keyword>
<protein>
    <recommendedName>
        <fullName>Transcription factor TT2</fullName>
    </recommendedName>
    <alternativeName>
        <fullName>Myb-related protein 123</fullName>
        <shortName>AtMYB123</shortName>
    </alternativeName>
    <alternativeName>
        <fullName>Myb-related transcription factor LBM2-like</fullName>
    </alternativeName>
    <alternativeName>
        <fullName>Protein TRANSPARENT TESTA 2</fullName>
    </alternativeName>
</protein>
<organism>
    <name type="scientific">Arabidopsis thaliana</name>
    <name type="common">Mouse-ear cress</name>
    <dbReference type="NCBI Taxonomy" id="3702"/>
    <lineage>
        <taxon>Eukaryota</taxon>
        <taxon>Viridiplantae</taxon>
        <taxon>Streptophyta</taxon>
        <taxon>Embryophyta</taxon>
        <taxon>Tracheophyta</taxon>
        <taxon>Spermatophyta</taxon>
        <taxon>Magnoliopsida</taxon>
        <taxon>eudicotyledons</taxon>
        <taxon>Gunneridae</taxon>
        <taxon>Pentapetalae</taxon>
        <taxon>rosids</taxon>
        <taxon>malvids</taxon>
        <taxon>Brassicales</taxon>
        <taxon>Brassicaceae</taxon>
        <taxon>Camelineae</taxon>
        <taxon>Arabidopsis</taxon>
    </lineage>
</organism>
<reference key="1">
    <citation type="journal article" date="2001" name="Plant Cell">
        <title>The Arabidopsis TT2 gene encodes an R2R3 MYB domain protein that acts as a key determinant for proanthocyanidin accumulation in developing seed.</title>
        <authorList>
            <person name="Nesi N."/>
            <person name="Jond C."/>
            <person name="Debeaujon I."/>
            <person name="Caboche M."/>
            <person name="Lepiniec L."/>
        </authorList>
    </citation>
    <scope>NUCLEOTIDE SEQUENCE [GENOMIC DNA]</scope>
    <scope>MUTANTS TT2-2 AND TT2-4</scope>
    <source>
        <strain>cv. Columbia</strain>
        <strain>cv. Landsberg erecta</strain>
        <strain>cv. Wassilewskija</strain>
    </source>
</reference>
<reference key="2">
    <citation type="journal article" date="2001" name="Curr. Opin. Plant Biol.">
        <title>The R2R3-MYB gene family in Arabidopsis thaliana.</title>
        <authorList>
            <person name="Stracke R."/>
            <person name="Werber M."/>
            <person name="Weisshaar B."/>
        </authorList>
    </citation>
    <scope>NUCLEOTIDE SEQUENCE [MRNA]</scope>
    <source>
        <strain>cv. Columbia</strain>
    </source>
</reference>
<reference key="3">
    <citation type="submission" date="2004-01" db="EMBL/GenBank/DDBJ databases">
        <title>The MYB transcription factor family in Arabidopsis: a genome-wide cloning and expression pattern analysis.</title>
        <authorList>
            <person name="Qu L.-J."/>
            <person name="Gu H."/>
        </authorList>
    </citation>
    <scope>NUCLEOTIDE SEQUENCE [MRNA]</scope>
</reference>
<reference key="4">
    <citation type="journal article" date="1998" name="DNA Res.">
        <title>Structural analysis of Arabidopsis thaliana chromosome 5. VII. Sequence features of the regions of 1,013,767 bp covered by sixteen physically assigned P1 and TAC clones.</title>
        <authorList>
            <person name="Nakamura Y."/>
            <person name="Sato S."/>
            <person name="Asamizu E."/>
            <person name="Kaneko T."/>
            <person name="Kotani H."/>
            <person name="Miyajima N."/>
            <person name="Tabata S."/>
        </authorList>
    </citation>
    <scope>NUCLEOTIDE SEQUENCE [LARGE SCALE GENOMIC DNA]</scope>
    <source>
        <strain>cv. Columbia</strain>
    </source>
</reference>
<reference key="5">
    <citation type="journal article" date="2017" name="Plant J.">
        <title>Araport11: a complete reannotation of the Arabidopsis thaliana reference genome.</title>
        <authorList>
            <person name="Cheng C.Y."/>
            <person name="Krishnakumar V."/>
            <person name="Chan A.P."/>
            <person name="Thibaud-Nissen F."/>
            <person name="Schobel S."/>
            <person name="Town C.D."/>
        </authorList>
    </citation>
    <scope>GENOME REANNOTATION</scope>
    <source>
        <strain>cv. Columbia</strain>
    </source>
</reference>
<reference key="6">
    <citation type="journal article" date="2006" name="Plant Biotechnol. J.">
        <title>Simultaneous high-throughput recombinational cloning of open reading frames in closed and open configurations.</title>
        <authorList>
            <person name="Underwood B.A."/>
            <person name="Vanderhaeghen R."/>
            <person name="Whitford R."/>
            <person name="Town C.D."/>
            <person name="Hilson P."/>
        </authorList>
    </citation>
    <scope>NUCLEOTIDE SEQUENCE [LARGE SCALE MRNA]</scope>
    <source>
        <strain>cv. Columbia</strain>
    </source>
</reference>
<reference key="7">
    <citation type="journal article" date="2004" name="Plant J.">
        <title>Comprehensive identification of Arabidopsis thaliana MYB transcription factors interacting with R/B-like BHLH proteins.</title>
        <authorList>
            <person name="Zimmermann I.M."/>
            <person name="Heim M.A."/>
            <person name="Weisshaar B."/>
            <person name="Uhrig J.F."/>
        </authorList>
    </citation>
    <scope>FUNCTION</scope>
    <scope>INTERACTION WITH BHLH2; BHLH12 AND BHLH42</scope>
</reference>
<reference key="8">
    <citation type="journal article" date="2006" name="Plant Mol. Biol.">
        <title>The MYB transcription factor superfamily of Arabidopsis: expression analysis and phylogenetic comparison with the rice MYB family.</title>
        <authorList>
            <person name="Chen Y."/>
            <person name="Yang X."/>
            <person name="He K."/>
            <person name="Liu M."/>
            <person name="Li J."/>
            <person name="Gao Z."/>
            <person name="Lin Z."/>
            <person name="Zhang Y."/>
            <person name="Wang X."/>
            <person name="Qiu X."/>
            <person name="Shen Y."/>
            <person name="Zhang L."/>
            <person name="Deng X."/>
            <person name="Luo J."/>
            <person name="Deng X.-W."/>
            <person name="Chen Z."/>
            <person name="Gu H."/>
            <person name="Qu L.-J."/>
        </authorList>
    </citation>
    <scope>GENE FAMILY</scope>
</reference>
<evidence type="ECO:0000255" key="1"/>
<evidence type="ECO:0000255" key="2">
    <source>
        <dbReference type="PROSITE-ProRule" id="PRU00625"/>
    </source>
</evidence>
<evidence type="ECO:0000269" key="3">
    <source>
    </source>
</evidence>
<evidence type="ECO:0000305" key="4"/>
<proteinExistence type="evidence at protein level"/>
<comment type="function">
    <text evidence="3">Transcription activator, when associated with BHLH2/EGL3/MYC146, BHLH12/MYC1, or BHLH42/TT8. Involved in the control of flavonoid late metabolism in developing siliques. Plays a key role in determining the tissue-specific activation of leucoanthocyanidin reductase (BANYULS).</text>
</comment>
<comment type="subunit">
    <text evidence="3">Interacts with BHLH2/EGL3/MYC146, BHLH12/MYC1 and BHLH42/TT8.</text>
</comment>
<comment type="interaction">
    <interactant intactId="EBI-395778">
        <id>Q9FJA2</id>
    </interactant>
    <interactant intactId="EBI-395790">
        <id>Q9FT81</id>
        <label>TT8</label>
    </interactant>
    <organismsDiffer>false</organismsDiffer>
    <experiments>5</experiments>
</comment>
<comment type="subcellular location">
    <subcellularLocation>
        <location>Nucleus</location>
    </subcellularLocation>
</comment>
<comment type="tissue specificity">
    <text>Expressed at a high level in immature siliques and at a lower level in flowers. Undetected in young seedlings, roots, leaves and inflorescence stems.</text>
</comment>
<comment type="developmental stage">
    <text>Highly expressed from the very early stages of embryogenesis to the globular stage, decreases rapidly from the late heart-torpedo stage and did not persist after the completion of embryogenesis.</text>
</comment>
<comment type="miscellaneous">
    <text>TT2 activity is tightly linked to the presence of TT8.</text>
</comment>
<comment type="sequence caution" evidence="4">
    <conflict type="erroneous termination">
        <sequence resource="EMBL-CDS" id="ABK28720"/>
    </conflict>
    <text>Extended C-terminus.</text>
</comment>